<comment type="function">
    <text evidence="1">Component of the eukaryotic translation initiation factor 3 (eIF-3) complex, which is involved in protein synthesis of a specialized repertoire of mRNAs and, together with other initiation factors, stimulates binding of mRNA and methionyl-tRNAi to the 40S ribosome. The eIF-3 complex specifically targets and initiates translation of a subset of mRNAs involved in cell proliferation.</text>
</comment>
<comment type="subunit">
    <text evidence="1">Component of the eukaryotic translation initiation factor 3 (eIF-3) complex. The eIF-3 complex interacts with pix.</text>
</comment>
<comment type="subcellular location">
    <subcellularLocation>
        <location evidence="1">Cytoplasm</location>
    </subcellularLocation>
</comment>
<comment type="similarity">
    <text evidence="1">Belongs to the eIF-3 subunit L family.</text>
</comment>
<sequence length="539" mass="63222">MYGGDEYATNSEYYDDYAHTGDPQLDMEYERNYYAARMPDNVKYFLINFCQAIKEGNLYDIQNMYENTFPQISDHHFDKTAWPEEQEVAAIVDNDKVFLILYKELYYRHIHARIPGGPKLEQRINSFFNYCDFFNLIISAQNPVMLELPDIWLWELVDEFVYQFQNFAQYRARLTEKSQDEIQQLCVNHSNEWSILCILNVLHSLVDISNIKKQLEAISQGVDPQTVAGDFGKLSFYKMLGYFSLVGLLRVHSLLGDYYQAIKVLEPIEIHKKSAYSHIPACQISTSYYVGFAYMMMRRYADAIRTFSDILLYIQRTKQLYSTRSYQNDQINKQAEQMYHLLAICLVLHPQCIDESIQQVLREKNYHDAMFKMQCGDLEVFKSFFVFACPRFVSPCPPAVDAPMDDYVKDPMEHQLLVFMDEVRQQKDLPTTRSYLKLYTTLPLTKLASFIDPNASEDDVSKLLIRLLCFKHKMRNLVWSKGPSGLEGTFKSGSELDFYIDDDMIHIADTKVSHRYGDFFVRKILKFNDLNRKLKNINI</sequence>
<keyword id="KW-0963">Cytoplasm</keyword>
<keyword id="KW-0396">Initiation factor</keyword>
<keyword id="KW-0648">Protein biosynthesis</keyword>
<keyword id="KW-1185">Reference proteome</keyword>
<organism>
    <name type="scientific">Drosophila sechellia</name>
    <name type="common">Fruit fly</name>
    <dbReference type="NCBI Taxonomy" id="7238"/>
    <lineage>
        <taxon>Eukaryota</taxon>
        <taxon>Metazoa</taxon>
        <taxon>Ecdysozoa</taxon>
        <taxon>Arthropoda</taxon>
        <taxon>Hexapoda</taxon>
        <taxon>Insecta</taxon>
        <taxon>Pterygota</taxon>
        <taxon>Neoptera</taxon>
        <taxon>Endopterygota</taxon>
        <taxon>Diptera</taxon>
        <taxon>Brachycera</taxon>
        <taxon>Muscomorpha</taxon>
        <taxon>Ephydroidea</taxon>
        <taxon>Drosophilidae</taxon>
        <taxon>Drosophila</taxon>
        <taxon>Sophophora</taxon>
    </lineage>
</organism>
<proteinExistence type="inferred from homology"/>
<reference key="1">
    <citation type="journal article" date="2007" name="Nature">
        <title>Evolution of genes and genomes on the Drosophila phylogeny.</title>
        <authorList>
            <consortium name="Drosophila 12 genomes consortium"/>
        </authorList>
    </citation>
    <scope>NUCLEOTIDE SEQUENCE [LARGE SCALE GENOMIC DNA]</scope>
    <source>
        <strain>Rob3c / Tucson 14021-0248.25</strain>
    </source>
</reference>
<dbReference type="EMBL" id="CH480815">
    <property type="protein sequence ID" value="EDW41224.1"/>
    <property type="molecule type" value="Genomic_DNA"/>
</dbReference>
<dbReference type="SMR" id="B4HFJ3"/>
<dbReference type="STRING" id="7238.B4HFJ3"/>
<dbReference type="EnsemblMetazoa" id="FBtr0207662">
    <property type="protein sequence ID" value="FBpp0206154"/>
    <property type="gene ID" value="FBgn0179540"/>
</dbReference>
<dbReference type="EnsemblMetazoa" id="XM_002030202.2">
    <property type="protein sequence ID" value="XP_002030238.1"/>
    <property type="gene ID" value="LOC6605405"/>
</dbReference>
<dbReference type="GeneID" id="6605405"/>
<dbReference type="KEGG" id="dse:6605405"/>
<dbReference type="CTD" id="51386"/>
<dbReference type="HOGENOM" id="CLU_029210_0_1_1"/>
<dbReference type="OMA" id="AGWFIRN"/>
<dbReference type="OrthoDB" id="4602at7215"/>
<dbReference type="PhylomeDB" id="B4HFJ3"/>
<dbReference type="Proteomes" id="UP000001292">
    <property type="component" value="Unassembled WGS sequence"/>
</dbReference>
<dbReference type="GO" id="GO:0016282">
    <property type="term" value="C:eukaryotic 43S preinitiation complex"/>
    <property type="evidence" value="ECO:0007669"/>
    <property type="project" value="UniProtKB-UniRule"/>
</dbReference>
<dbReference type="GO" id="GO:0033290">
    <property type="term" value="C:eukaryotic 48S preinitiation complex"/>
    <property type="evidence" value="ECO:0007669"/>
    <property type="project" value="UniProtKB-UniRule"/>
</dbReference>
<dbReference type="GO" id="GO:0005852">
    <property type="term" value="C:eukaryotic translation initiation factor 3 complex"/>
    <property type="evidence" value="ECO:0007669"/>
    <property type="project" value="UniProtKB-UniRule"/>
</dbReference>
<dbReference type="GO" id="GO:0003743">
    <property type="term" value="F:translation initiation factor activity"/>
    <property type="evidence" value="ECO:0007669"/>
    <property type="project" value="UniProtKB-UniRule"/>
</dbReference>
<dbReference type="GO" id="GO:0001732">
    <property type="term" value="P:formation of cytoplasmic translation initiation complex"/>
    <property type="evidence" value="ECO:0007669"/>
    <property type="project" value="UniProtKB-UniRule"/>
</dbReference>
<dbReference type="HAMAP" id="MF_03011">
    <property type="entry name" value="eIF3l"/>
    <property type="match status" value="1"/>
</dbReference>
<dbReference type="InterPro" id="IPR019382">
    <property type="entry name" value="eIF3l"/>
</dbReference>
<dbReference type="InterPro" id="IPR000717">
    <property type="entry name" value="PCI_dom"/>
</dbReference>
<dbReference type="InterPro" id="IPR011990">
    <property type="entry name" value="TPR-like_helical_dom_sf"/>
</dbReference>
<dbReference type="PANTHER" id="PTHR13242">
    <property type="entry name" value="EUKARYOTIC TRANSLATION INITIATION FACTOR 3"/>
    <property type="match status" value="1"/>
</dbReference>
<dbReference type="PANTHER" id="PTHR13242:SF0">
    <property type="entry name" value="EUKARYOTIC TRANSLATION INITIATION FACTOR 3 SUBUNIT L"/>
    <property type="match status" value="1"/>
</dbReference>
<dbReference type="Pfam" id="PF10255">
    <property type="entry name" value="Paf67"/>
    <property type="match status" value="1"/>
</dbReference>
<dbReference type="SUPFAM" id="SSF48452">
    <property type="entry name" value="TPR-like"/>
    <property type="match status" value="1"/>
</dbReference>
<dbReference type="PROSITE" id="PS50250">
    <property type="entry name" value="PCI"/>
    <property type="match status" value="1"/>
</dbReference>
<protein>
    <recommendedName>
        <fullName evidence="1">Eukaryotic translation initiation factor 3 subunit L</fullName>
        <shortName evidence="1">eIF3l</shortName>
    </recommendedName>
</protein>
<feature type="chain" id="PRO_0000364249" description="Eukaryotic translation initiation factor 3 subunit L">
    <location>
        <begin position="1"/>
        <end position="539"/>
    </location>
</feature>
<feature type="domain" description="PCI" evidence="2">
    <location>
        <begin position="306"/>
        <end position="514"/>
    </location>
</feature>
<accession>B4HFJ3</accession>
<evidence type="ECO:0000255" key="1">
    <source>
        <dbReference type="HAMAP-Rule" id="MF_03011"/>
    </source>
</evidence>
<evidence type="ECO:0000255" key="2">
    <source>
        <dbReference type="PROSITE-ProRule" id="PRU01185"/>
    </source>
</evidence>
<name>EIF3L_DROSE</name>
<gene>
    <name type="ORF">GM24677</name>
</gene>